<dbReference type="EMBL" id="AF055473">
    <property type="protein sequence ID" value="AAC33676.1"/>
    <property type="molecule type" value="mRNA"/>
</dbReference>
<dbReference type="EMBL" id="BX649339">
    <property type="protein sequence ID" value="CAI95422.1"/>
    <property type="molecule type" value="Genomic_DNA"/>
</dbReference>
<dbReference type="EMBL" id="BC018052">
    <property type="protein sequence ID" value="AAH18052.1"/>
    <property type="molecule type" value="mRNA"/>
</dbReference>
<dbReference type="EMBL" id="BC143620">
    <property type="protein sequence ID" value="AAI43621.1"/>
    <property type="molecule type" value="mRNA"/>
</dbReference>
<dbReference type="RefSeq" id="NP_001091877.1">
    <property type="nucleotide sequence ID" value="NM_001098407.1"/>
</dbReference>
<dbReference type="RefSeq" id="NP_001120672.2">
    <property type="nucleotide sequence ID" value="NM_001127200.2"/>
</dbReference>
<dbReference type="RefSeq" id="NP_036328.1">
    <property type="nucleotide sequence ID" value="NM_012196.1"/>
</dbReference>
<dbReference type="BioGRID" id="609809">
    <property type="interactions" value="2"/>
</dbReference>
<dbReference type="BioGRID" id="755858">
    <property type="interactions" value="8"/>
</dbReference>
<dbReference type="FunCoup" id="Q9UEU5">
    <property type="interactions" value="2"/>
</dbReference>
<dbReference type="IntAct" id="Q9UEU5">
    <property type="interactions" value="10"/>
</dbReference>
<dbReference type="iPTMnet" id="Q9UEU5"/>
<dbReference type="PhosphoSitePlus" id="Q9UEU5"/>
<dbReference type="BioMuta" id="HGNC:31959"/>
<dbReference type="DMDM" id="21759147"/>
<dbReference type="jPOST" id="Q9UEU5"/>
<dbReference type="MassIVE" id="Q9UEU5"/>
<dbReference type="PeptideAtlas" id="Q9UEU5"/>
<dbReference type="Pumba" id="Q9UEU5"/>
<dbReference type="TopDownProteomics" id="Q9UEU5"/>
<dbReference type="DNASU" id="26749"/>
<dbReference type="GeneID" id="100101629"/>
<dbReference type="GeneID" id="26749"/>
<dbReference type="GeneID" id="729408"/>
<dbReference type="KEGG" id="hsa:100101629"/>
<dbReference type="KEGG" id="hsa:26749"/>
<dbReference type="KEGG" id="hsa:729408"/>
<dbReference type="AGR" id="HGNC:31959"/>
<dbReference type="AGR" id="HGNC:31960"/>
<dbReference type="AGR" id="HGNC:4106"/>
<dbReference type="CTD" id="100101629"/>
<dbReference type="CTD" id="26749"/>
<dbReference type="CTD" id="729408"/>
<dbReference type="GeneCards" id="GAGE2D"/>
<dbReference type="GeneCards" id="GAGE8"/>
<dbReference type="HGNC" id="HGNC:31959">
    <property type="gene designation" value="GAGE2D"/>
</dbReference>
<dbReference type="HGNC" id="HGNC:4106">
    <property type="gene designation" value="GAGE8"/>
</dbReference>
<dbReference type="MIM" id="300638">
    <property type="type" value="gene"/>
</dbReference>
<dbReference type="MIM" id="300735">
    <property type="type" value="gene"/>
</dbReference>
<dbReference type="neXtProt" id="NX_Q9UEU5"/>
<dbReference type="PharmGKB" id="PA162389275"/>
<dbReference type="InParanoid" id="Q9UEU5"/>
<dbReference type="OrthoDB" id="9539459at2759"/>
<dbReference type="PAN-GO" id="Q9UEU5">
    <property type="GO annotations" value="0 GO annotations based on evolutionary models"/>
</dbReference>
<dbReference type="PhylomeDB" id="Q9UEU5"/>
<dbReference type="TreeFam" id="TF340669"/>
<dbReference type="PathwayCommons" id="Q9UEU5"/>
<dbReference type="SignaLink" id="Q9UEU5"/>
<dbReference type="BioGRID-ORCS" id="100101629">
    <property type="hits" value="0 hits in 16 CRISPR screens"/>
</dbReference>
<dbReference type="BioGRID-ORCS" id="26749">
    <property type="hits" value="1 hit in 30 CRISPR screens"/>
</dbReference>
<dbReference type="BioGRID-ORCS" id="729408">
    <property type="hits" value="4 hits in 143 CRISPR screens"/>
</dbReference>
<dbReference type="Pharos" id="Q9UEU5">
    <property type="development level" value="Tdark"/>
</dbReference>
<dbReference type="PRO" id="PR:Q9UEU5"/>
<dbReference type="Proteomes" id="UP000005640">
    <property type="component" value="Unplaced"/>
</dbReference>
<dbReference type="RNAct" id="Q9UEU5">
    <property type="molecule type" value="protein"/>
</dbReference>
<dbReference type="InterPro" id="IPR031320">
    <property type="entry name" value="GAGE"/>
</dbReference>
<dbReference type="InterPro" id="IPR008625">
    <property type="entry name" value="GAGE_fam"/>
</dbReference>
<dbReference type="PANTHER" id="PTHR14047:SF30">
    <property type="entry name" value="G ANTIGEN 1-RELATED"/>
    <property type="match status" value="1"/>
</dbReference>
<dbReference type="PANTHER" id="PTHR14047">
    <property type="entry name" value="P ANTIGEN FAMILY MEMBER 5-RELATED"/>
    <property type="match status" value="1"/>
</dbReference>
<dbReference type="Pfam" id="PF05831">
    <property type="entry name" value="GAGE"/>
    <property type="match status" value="1"/>
</dbReference>
<dbReference type="SMART" id="SM01379">
    <property type="entry name" value="GAGE"/>
    <property type="match status" value="1"/>
</dbReference>
<evidence type="ECO:0000256" key="1">
    <source>
        <dbReference type="SAM" id="MobiDB-lite"/>
    </source>
</evidence>
<evidence type="ECO:0000305" key="2"/>
<reference key="1">
    <citation type="journal article" date="1999" name="Cancer Res.">
        <title>Characterization of the GAGE genes that are expressed in various human cancers and in normal testis.</title>
        <authorList>
            <person name="De Backer O."/>
            <person name="Arden K.C."/>
            <person name="Boretti M."/>
            <person name="Vantomme V."/>
            <person name="De Smet C."/>
            <person name="Czekay S."/>
            <person name="Viars C.S."/>
            <person name="De Plaen E."/>
            <person name="Brasseur F."/>
            <person name="Chomez P."/>
            <person name="Van den Eynde B."/>
            <person name="Boon T."/>
            <person name="van der Bruggen P."/>
        </authorList>
    </citation>
    <scope>NUCLEOTIDE SEQUENCE [MRNA]</scope>
</reference>
<reference key="2">
    <citation type="journal article" date="2005" name="Nature">
        <title>The DNA sequence of the human X chromosome.</title>
        <authorList>
            <person name="Ross M.T."/>
            <person name="Grafham D.V."/>
            <person name="Coffey A.J."/>
            <person name="Scherer S."/>
            <person name="McLay K."/>
            <person name="Muzny D."/>
            <person name="Platzer M."/>
            <person name="Howell G.R."/>
            <person name="Burrows C."/>
            <person name="Bird C.P."/>
            <person name="Frankish A."/>
            <person name="Lovell F.L."/>
            <person name="Howe K.L."/>
            <person name="Ashurst J.L."/>
            <person name="Fulton R.S."/>
            <person name="Sudbrak R."/>
            <person name="Wen G."/>
            <person name="Jones M.C."/>
            <person name="Hurles M.E."/>
            <person name="Andrews T.D."/>
            <person name="Scott C.E."/>
            <person name="Searle S."/>
            <person name="Ramser J."/>
            <person name="Whittaker A."/>
            <person name="Deadman R."/>
            <person name="Carter N.P."/>
            <person name="Hunt S.E."/>
            <person name="Chen R."/>
            <person name="Cree A."/>
            <person name="Gunaratne P."/>
            <person name="Havlak P."/>
            <person name="Hodgson A."/>
            <person name="Metzker M.L."/>
            <person name="Richards S."/>
            <person name="Scott G."/>
            <person name="Steffen D."/>
            <person name="Sodergren E."/>
            <person name="Wheeler D.A."/>
            <person name="Worley K.C."/>
            <person name="Ainscough R."/>
            <person name="Ambrose K.D."/>
            <person name="Ansari-Lari M.A."/>
            <person name="Aradhya S."/>
            <person name="Ashwell R.I."/>
            <person name="Babbage A.K."/>
            <person name="Bagguley C.L."/>
            <person name="Ballabio A."/>
            <person name="Banerjee R."/>
            <person name="Barker G.E."/>
            <person name="Barlow K.F."/>
            <person name="Barrett I.P."/>
            <person name="Bates K.N."/>
            <person name="Beare D.M."/>
            <person name="Beasley H."/>
            <person name="Beasley O."/>
            <person name="Beck A."/>
            <person name="Bethel G."/>
            <person name="Blechschmidt K."/>
            <person name="Brady N."/>
            <person name="Bray-Allen S."/>
            <person name="Bridgeman A.M."/>
            <person name="Brown A.J."/>
            <person name="Brown M.J."/>
            <person name="Bonnin D."/>
            <person name="Bruford E.A."/>
            <person name="Buhay C."/>
            <person name="Burch P."/>
            <person name="Burford D."/>
            <person name="Burgess J."/>
            <person name="Burrill W."/>
            <person name="Burton J."/>
            <person name="Bye J.M."/>
            <person name="Carder C."/>
            <person name="Carrel L."/>
            <person name="Chako J."/>
            <person name="Chapman J.C."/>
            <person name="Chavez D."/>
            <person name="Chen E."/>
            <person name="Chen G."/>
            <person name="Chen Y."/>
            <person name="Chen Z."/>
            <person name="Chinault C."/>
            <person name="Ciccodicola A."/>
            <person name="Clark S.Y."/>
            <person name="Clarke G."/>
            <person name="Clee C.M."/>
            <person name="Clegg S."/>
            <person name="Clerc-Blankenburg K."/>
            <person name="Clifford K."/>
            <person name="Cobley V."/>
            <person name="Cole C.G."/>
            <person name="Conquer J.S."/>
            <person name="Corby N."/>
            <person name="Connor R.E."/>
            <person name="David R."/>
            <person name="Davies J."/>
            <person name="Davis C."/>
            <person name="Davis J."/>
            <person name="Delgado O."/>
            <person name="Deshazo D."/>
            <person name="Dhami P."/>
            <person name="Ding Y."/>
            <person name="Dinh H."/>
            <person name="Dodsworth S."/>
            <person name="Draper H."/>
            <person name="Dugan-Rocha S."/>
            <person name="Dunham A."/>
            <person name="Dunn M."/>
            <person name="Durbin K.J."/>
            <person name="Dutta I."/>
            <person name="Eades T."/>
            <person name="Ellwood M."/>
            <person name="Emery-Cohen A."/>
            <person name="Errington H."/>
            <person name="Evans K.L."/>
            <person name="Faulkner L."/>
            <person name="Francis F."/>
            <person name="Frankland J."/>
            <person name="Fraser A.E."/>
            <person name="Galgoczy P."/>
            <person name="Gilbert J."/>
            <person name="Gill R."/>
            <person name="Gloeckner G."/>
            <person name="Gregory S.G."/>
            <person name="Gribble S."/>
            <person name="Griffiths C."/>
            <person name="Grocock R."/>
            <person name="Gu Y."/>
            <person name="Gwilliam R."/>
            <person name="Hamilton C."/>
            <person name="Hart E.A."/>
            <person name="Hawes A."/>
            <person name="Heath P.D."/>
            <person name="Heitmann K."/>
            <person name="Hennig S."/>
            <person name="Hernandez J."/>
            <person name="Hinzmann B."/>
            <person name="Ho S."/>
            <person name="Hoffs M."/>
            <person name="Howden P.J."/>
            <person name="Huckle E.J."/>
            <person name="Hume J."/>
            <person name="Hunt P.J."/>
            <person name="Hunt A.R."/>
            <person name="Isherwood J."/>
            <person name="Jacob L."/>
            <person name="Johnson D."/>
            <person name="Jones S."/>
            <person name="de Jong P.J."/>
            <person name="Joseph S.S."/>
            <person name="Keenan S."/>
            <person name="Kelly S."/>
            <person name="Kershaw J.K."/>
            <person name="Khan Z."/>
            <person name="Kioschis P."/>
            <person name="Klages S."/>
            <person name="Knights A.J."/>
            <person name="Kosiura A."/>
            <person name="Kovar-Smith C."/>
            <person name="Laird G.K."/>
            <person name="Langford C."/>
            <person name="Lawlor S."/>
            <person name="Leversha M."/>
            <person name="Lewis L."/>
            <person name="Liu W."/>
            <person name="Lloyd C."/>
            <person name="Lloyd D.M."/>
            <person name="Loulseged H."/>
            <person name="Loveland J.E."/>
            <person name="Lovell J.D."/>
            <person name="Lozado R."/>
            <person name="Lu J."/>
            <person name="Lyne R."/>
            <person name="Ma J."/>
            <person name="Maheshwari M."/>
            <person name="Matthews L.H."/>
            <person name="McDowall J."/>
            <person name="McLaren S."/>
            <person name="McMurray A."/>
            <person name="Meidl P."/>
            <person name="Meitinger T."/>
            <person name="Milne S."/>
            <person name="Miner G."/>
            <person name="Mistry S.L."/>
            <person name="Morgan M."/>
            <person name="Morris S."/>
            <person name="Mueller I."/>
            <person name="Mullikin J.C."/>
            <person name="Nguyen N."/>
            <person name="Nordsiek G."/>
            <person name="Nyakatura G."/>
            <person name="O'dell C.N."/>
            <person name="Okwuonu G."/>
            <person name="Palmer S."/>
            <person name="Pandian R."/>
            <person name="Parker D."/>
            <person name="Parrish J."/>
            <person name="Pasternak S."/>
            <person name="Patel D."/>
            <person name="Pearce A.V."/>
            <person name="Pearson D.M."/>
            <person name="Pelan S.E."/>
            <person name="Perez L."/>
            <person name="Porter K.M."/>
            <person name="Ramsey Y."/>
            <person name="Reichwald K."/>
            <person name="Rhodes S."/>
            <person name="Ridler K.A."/>
            <person name="Schlessinger D."/>
            <person name="Schueler M.G."/>
            <person name="Sehra H.K."/>
            <person name="Shaw-Smith C."/>
            <person name="Shen H."/>
            <person name="Sheridan E.M."/>
            <person name="Shownkeen R."/>
            <person name="Skuce C.D."/>
            <person name="Smith M.L."/>
            <person name="Sotheran E.C."/>
            <person name="Steingruber H.E."/>
            <person name="Steward C.A."/>
            <person name="Storey R."/>
            <person name="Swann R.M."/>
            <person name="Swarbreck D."/>
            <person name="Tabor P.E."/>
            <person name="Taudien S."/>
            <person name="Taylor T."/>
            <person name="Teague B."/>
            <person name="Thomas K."/>
            <person name="Thorpe A."/>
            <person name="Timms K."/>
            <person name="Tracey A."/>
            <person name="Trevanion S."/>
            <person name="Tromans A.C."/>
            <person name="d'Urso M."/>
            <person name="Verduzco D."/>
            <person name="Villasana D."/>
            <person name="Waldron L."/>
            <person name="Wall M."/>
            <person name="Wang Q."/>
            <person name="Warren J."/>
            <person name="Warry G.L."/>
            <person name="Wei X."/>
            <person name="West A."/>
            <person name="Whitehead S.L."/>
            <person name="Whiteley M.N."/>
            <person name="Wilkinson J.E."/>
            <person name="Willey D.L."/>
            <person name="Williams G."/>
            <person name="Williams L."/>
            <person name="Williamson A."/>
            <person name="Williamson H."/>
            <person name="Wilming L."/>
            <person name="Woodmansey R.L."/>
            <person name="Wray P.W."/>
            <person name="Yen J."/>
            <person name="Zhang J."/>
            <person name="Zhou J."/>
            <person name="Zoghbi H."/>
            <person name="Zorilla S."/>
            <person name="Buck D."/>
            <person name="Reinhardt R."/>
            <person name="Poustka A."/>
            <person name="Rosenthal A."/>
            <person name="Lehrach H."/>
            <person name="Meindl A."/>
            <person name="Minx P.J."/>
            <person name="Hillier L.W."/>
            <person name="Willard H.F."/>
            <person name="Wilson R.K."/>
            <person name="Waterston R.H."/>
            <person name="Rice C.M."/>
            <person name="Vaudin M."/>
            <person name="Coulson A."/>
            <person name="Nelson D.L."/>
            <person name="Weinstock G."/>
            <person name="Sulston J.E."/>
            <person name="Durbin R.M."/>
            <person name="Hubbard T."/>
            <person name="Gibbs R.A."/>
            <person name="Beck S."/>
            <person name="Rogers J."/>
            <person name="Bentley D.R."/>
        </authorList>
    </citation>
    <scope>NUCLEOTIDE SEQUENCE [LARGE SCALE GENOMIC DNA]</scope>
</reference>
<reference key="3">
    <citation type="journal article" date="2004" name="Genome Res.">
        <title>The status, quality, and expansion of the NIH full-length cDNA project: the Mammalian Gene Collection (MGC).</title>
        <authorList>
            <consortium name="The MGC Project Team"/>
        </authorList>
    </citation>
    <scope>NUCLEOTIDE SEQUENCE [LARGE SCALE MRNA]</scope>
    <source>
        <tissue>Brain</tissue>
        <tissue>Lung</tissue>
        <tissue>Placenta</tissue>
    </source>
</reference>
<reference key="4">
    <citation type="journal article" date="2008" name="Tissue Antigens">
        <title>An overview of the GAGE cancer/testis antigen family with the inclusion of newly identified members.</title>
        <authorList>
            <person name="Gjerstorff M.F."/>
            <person name="Ditzel H.J."/>
        </authorList>
    </citation>
    <scope>GAGE FAMILY</scope>
</reference>
<keyword id="KW-1185">Reference proteome</keyword>
<organism>
    <name type="scientific">Homo sapiens</name>
    <name type="common">Human</name>
    <dbReference type="NCBI Taxonomy" id="9606"/>
    <lineage>
        <taxon>Eukaryota</taxon>
        <taxon>Metazoa</taxon>
        <taxon>Chordata</taxon>
        <taxon>Craniata</taxon>
        <taxon>Vertebrata</taxon>
        <taxon>Euteleostomi</taxon>
        <taxon>Mammalia</taxon>
        <taxon>Eutheria</taxon>
        <taxon>Euarchontoglires</taxon>
        <taxon>Primates</taxon>
        <taxon>Haplorrhini</taxon>
        <taxon>Catarrhini</taxon>
        <taxon>Hominidae</taxon>
        <taxon>Homo</taxon>
    </lineage>
</organism>
<name>GGE2D_HUMAN</name>
<protein>
    <recommendedName>
        <fullName>G antigen 2D</fullName>
        <shortName>GAGE-2D</shortName>
    </recommendedName>
    <alternativeName>
        <fullName>Cancer/testis antigen 4.8</fullName>
        <shortName>CT4.8</shortName>
    </alternativeName>
    <alternativeName>
        <fullName>G antigen 8</fullName>
        <shortName>GAGE-8</shortName>
    </alternativeName>
</protein>
<proteinExistence type="evidence at protein level"/>
<feature type="chain" id="PRO_0000148346" description="G antigen 2D">
    <location>
        <begin position="1"/>
        <end position="116"/>
    </location>
</feature>
<feature type="region of interest" description="Disordered" evidence="1">
    <location>
        <begin position="1"/>
        <end position="116"/>
    </location>
</feature>
<feature type="compositionally biased region" description="Acidic residues" evidence="1">
    <location>
        <begin position="31"/>
        <end position="44"/>
    </location>
</feature>
<feature type="compositionally biased region" description="Acidic residues" evidence="1">
    <location>
        <begin position="86"/>
        <end position="95"/>
    </location>
</feature>
<feature type="compositionally biased region" description="Basic and acidic residues" evidence="1">
    <location>
        <begin position="102"/>
        <end position="116"/>
    </location>
</feature>
<gene>
    <name type="primary">GAGE2D</name>
</gene>
<gene>
    <name type="primary">GAGE8</name>
</gene>
<sequence length="116" mass="12764">MSWRGRSTYRPRPRRYVEPPEMIGPMRPEQFSDEVEPATPEEGEPATQRQDPAAAQEGEDEGASAGQGPKPEADSQEQGHPQTGCECEDGPDGQEMDPPNPEEVKTPEEGEKQSQC</sequence>
<accession>Q9UEU5</accession>
<accession>A6NG46</accession>
<accession>A6NNR8</accession>
<accession>B7ZL76</accession>
<accession>Q4V325</accession>
<comment type="interaction">
    <interactant intactId="EBI-751641">
        <id>Q9UEU5</id>
    </interactant>
    <interactant intactId="EBI-10172181">
        <id>Q53SE7</id>
        <label>FLJ13057</label>
    </interactant>
    <organismsDiffer>false</organismsDiffer>
    <experiments>5</experiments>
</comment>
<comment type="interaction">
    <interactant intactId="EBI-751641">
        <id>Q9UEU5</id>
    </interactant>
    <interactant intactId="EBI-745707">
        <id>Q8NEA9</id>
        <label>GMCL2</label>
    </interactant>
    <organismsDiffer>false</organismsDiffer>
    <experiments>5</experiments>
</comment>
<comment type="tissue specificity">
    <text>Not expressed in normal tissues, except in testis, but expressed by a large proportion of tumors of various histological origins.</text>
</comment>
<comment type="miscellaneous">
    <text>This gene belongs to a family of genes organized in clustered repeats. They have a high degree of predicted sequence identity, but differ by scattered single nucleotide substitution. Their sequences contain either the antigenic peptide YYWPRPRRY or YRPRPRRY which is recognized by cytotoxic T-cells.</text>
</comment>
<comment type="similarity">
    <text evidence="2">Belongs to the GAGE family.</text>
</comment>
<comment type="caution">
    <text evidence="2">The first GAGE nomenclature was based on identified mRNA sequences, but the high identity of the GAGE members made impossible to separate products of paralogous genes from polymorph products. PubMed:18179644 presented a new GAGE gene nomenclature based on the identified genes and their products.</text>
</comment>